<comment type="catalytic activity">
    <reaction evidence="1">
        <text>(S)-4-amino-5-oxopentanoate = 5-aminolevulinate</text>
        <dbReference type="Rhea" id="RHEA:14265"/>
        <dbReference type="ChEBI" id="CHEBI:57501"/>
        <dbReference type="ChEBI" id="CHEBI:356416"/>
        <dbReference type="EC" id="5.4.3.8"/>
    </reaction>
</comment>
<comment type="cofactor">
    <cofactor evidence="1">
        <name>pyridoxal 5'-phosphate</name>
        <dbReference type="ChEBI" id="CHEBI:597326"/>
    </cofactor>
</comment>
<comment type="pathway">
    <text evidence="1">Porphyrin-containing compound metabolism; protoporphyrin-IX biosynthesis; 5-aminolevulinate from L-glutamyl-tRNA(Glu): step 2/2.</text>
</comment>
<comment type="subunit">
    <text evidence="1">Homodimer.</text>
</comment>
<comment type="subcellular location">
    <subcellularLocation>
        <location evidence="1">Cytoplasm</location>
    </subcellularLocation>
</comment>
<comment type="similarity">
    <text evidence="1">Belongs to the class-III pyridoxal-phosphate-dependent aminotransferase family. HemL subfamily.</text>
</comment>
<dbReference type="EC" id="5.4.3.8" evidence="1"/>
<dbReference type="EMBL" id="CP000227">
    <property type="protein sequence ID" value="ACM11031.1"/>
    <property type="molecule type" value="Genomic_DNA"/>
</dbReference>
<dbReference type="SMR" id="B9J3N2"/>
<dbReference type="KEGG" id="bcq:BCQ_0559"/>
<dbReference type="HOGENOM" id="CLU_016922_1_5_9"/>
<dbReference type="UniPathway" id="UPA00251">
    <property type="reaction ID" value="UER00317"/>
</dbReference>
<dbReference type="Proteomes" id="UP000000441">
    <property type="component" value="Chromosome"/>
</dbReference>
<dbReference type="GO" id="GO:0005737">
    <property type="term" value="C:cytoplasm"/>
    <property type="evidence" value="ECO:0007669"/>
    <property type="project" value="UniProtKB-SubCell"/>
</dbReference>
<dbReference type="GO" id="GO:0042286">
    <property type="term" value="F:glutamate-1-semialdehyde 2,1-aminomutase activity"/>
    <property type="evidence" value="ECO:0007669"/>
    <property type="project" value="UniProtKB-UniRule"/>
</dbReference>
<dbReference type="GO" id="GO:0030170">
    <property type="term" value="F:pyridoxal phosphate binding"/>
    <property type="evidence" value="ECO:0007669"/>
    <property type="project" value="InterPro"/>
</dbReference>
<dbReference type="GO" id="GO:0008483">
    <property type="term" value="F:transaminase activity"/>
    <property type="evidence" value="ECO:0007669"/>
    <property type="project" value="InterPro"/>
</dbReference>
<dbReference type="GO" id="GO:0006782">
    <property type="term" value="P:protoporphyrinogen IX biosynthetic process"/>
    <property type="evidence" value="ECO:0007669"/>
    <property type="project" value="UniProtKB-UniRule"/>
</dbReference>
<dbReference type="CDD" id="cd00610">
    <property type="entry name" value="OAT_like"/>
    <property type="match status" value="1"/>
</dbReference>
<dbReference type="FunFam" id="3.40.640.10:FF:000021">
    <property type="entry name" value="Glutamate-1-semialdehyde 2,1-aminomutase"/>
    <property type="match status" value="1"/>
</dbReference>
<dbReference type="Gene3D" id="3.90.1150.10">
    <property type="entry name" value="Aspartate Aminotransferase, domain 1"/>
    <property type="match status" value="1"/>
</dbReference>
<dbReference type="Gene3D" id="3.40.640.10">
    <property type="entry name" value="Type I PLP-dependent aspartate aminotransferase-like (Major domain)"/>
    <property type="match status" value="1"/>
</dbReference>
<dbReference type="HAMAP" id="MF_00375">
    <property type="entry name" value="HemL_aminotrans_3"/>
    <property type="match status" value="1"/>
</dbReference>
<dbReference type="InterPro" id="IPR004639">
    <property type="entry name" value="4pyrrol_synth_GluAld_NH2Trfase"/>
</dbReference>
<dbReference type="InterPro" id="IPR005814">
    <property type="entry name" value="Aminotrans_3"/>
</dbReference>
<dbReference type="InterPro" id="IPR049704">
    <property type="entry name" value="Aminotrans_3_PPA_site"/>
</dbReference>
<dbReference type="InterPro" id="IPR015424">
    <property type="entry name" value="PyrdxlP-dep_Trfase"/>
</dbReference>
<dbReference type="InterPro" id="IPR015421">
    <property type="entry name" value="PyrdxlP-dep_Trfase_major"/>
</dbReference>
<dbReference type="InterPro" id="IPR015422">
    <property type="entry name" value="PyrdxlP-dep_Trfase_small"/>
</dbReference>
<dbReference type="NCBIfam" id="TIGR00713">
    <property type="entry name" value="hemL"/>
    <property type="match status" value="1"/>
</dbReference>
<dbReference type="NCBIfam" id="NF000818">
    <property type="entry name" value="PRK00062.1"/>
    <property type="match status" value="1"/>
</dbReference>
<dbReference type="NCBIfam" id="NF009055">
    <property type="entry name" value="PRK12389.1"/>
    <property type="match status" value="1"/>
</dbReference>
<dbReference type="PANTHER" id="PTHR43713">
    <property type="entry name" value="GLUTAMATE-1-SEMIALDEHYDE 2,1-AMINOMUTASE"/>
    <property type="match status" value="1"/>
</dbReference>
<dbReference type="PANTHER" id="PTHR43713:SF1">
    <property type="entry name" value="GLUTAMATE-1-SEMIALDEHYDE 2,1-AMINOMUTASE 2"/>
    <property type="match status" value="1"/>
</dbReference>
<dbReference type="Pfam" id="PF00202">
    <property type="entry name" value="Aminotran_3"/>
    <property type="match status" value="1"/>
</dbReference>
<dbReference type="SUPFAM" id="SSF53383">
    <property type="entry name" value="PLP-dependent transferases"/>
    <property type="match status" value="1"/>
</dbReference>
<dbReference type="PROSITE" id="PS00600">
    <property type="entry name" value="AA_TRANSFER_CLASS_3"/>
    <property type="match status" value="1"/>
</dbReference>
<evidence type="ECO:0000255" key="1">
    <source>
        <dbReference type="HAMAP-Rule" id="MF_00375"/>
    </source>
</evidence>
<proteinExistence type="inferred from homology"/>
<gene>
    <name evidence="1" type="primary">hemL1</name>
    <name type="ordered locus">BCQ_0559</name>
</gene>
<feature type="chain" id="PRO_0000382273" description="Glutamate-1-semialdehyde 2,1-aminomutase 1">
    <location>
        <begin position="1"/>
        <end position="434"/>
    </location>
</feature>
<feature type="modified residue" description="N6-(pyridoxal phosphate)lysine" evidence="1">
    <location>
        <position position="270"/>
    </location>
</feature>
<keyword id="KW-0963">Cytoplasm</keyword>
<keyword id="KW-0413">Isomerase</keyword>
<keyword id="KW-0627">Porphyrin biosynthesis</keyword>
<keyword id="KW-0663">Pyridoxal phosphate</keyword>
<sequence>MVVKFTKSEALHKEALEHIVGGVNSPSRSFKAVGGGAPVAMERGKGAYFWDVDGNKYIDYLAAYGPIITGHAHPHITKAITTAAENGVLYGTPTALEVKFAKMLKEAMPALDKVRFVNSGTEAVMTTIRVARAYTGRTKIMKFAGCYHGHSDLVLVAAGSGPSTLGTPDSAGVPQSIAQEVITVPFNNVETLKEALDKWGHEVAAILVEPIVGNFGIVEPKPGFLEKVNELVHEAGALVIYDEVITAFRFMYGGAQDLLGVTPDLTALGKVIGGGLPIGAYGGKKEIMEQVAPLGPAYQAGTMAGNPASMASGIACLEVLQQEGLYEKLDELGAMLEKGILEQAEKHNIDITLNRLKGALTVYFTTNTIEDYDAAQDTDGEMFGKFFKLMLQEGINLAPSKYEAWFLTTEHTKEDIEYTIEAVGRAFAALANNK</sequence>
<protein>
    <recommendedName>
        <fullName evidence="1">Glutamate-1-semialdehyde 2,1-aminomutase 1</fullName>
        <shortName evidence="1">GSA 1</shortName>
        <ecNumber evidence="1">5.4.3.8</ecNumber>
    </recommendedName>
    <alternativeName>
        <fullName evidence="1">Glutamate-1-semialdehyde aminotransferase 1</fullName>
        <shortName evidence="1">GSA-AT 1</shortName>
    </alternativeName>
</protein>
<reference key="1">
    <citation type="journal article" date="2009" name="J. Bacteriol.">
        <title>Complete genome sequence of the extremophilic Bacillus cereus strain Q1 with industrial applications.</title>
        <authorList>
            <person name="Xiong Z."/>
            <person name="Jiang Y."/>
            <person name="Qi D."/>
            <person name="Lu H."/>
            <person name="Yang F."/>
            <person name="Yang J."/>
            <person name="Chen L."/>
            <person name="Sun L."/>
            <person name="Xu X."/>
            <person name="Xue Y."/>
            <person name="Zhu Y."/>
            <person name="Jin Q."/>
        </authorList>
    </citation>
    <scope>NUCLEOTIDE SEQUENCE [LARGE SCALE GENOMIC DNA]</scope>
    <source>
        <strain>Q1</strain>
    </source>
</reference>
<name>GSA1_BACCQ</name>
<organism>
    <name type="scientific">Bacillus cereus (strain Q1)</name>
    <dbReference type="NCBI Taxonomy" id="361100"/>
    <lineage>
        <taxon>Bacteria</taxon>
        <taxon>Bacillati</taxon>
        <taxon>Bacillota</taxon>
        <taxon>Bacilli</taxon>
        <taxon>Bacillales</taxon>
        <taxon>Bacillaceae</taxon>
        <taxon>Bacillus</taxon>
        <taxon>Bacillus cereus group</taxon>
    </lineage>
</organism>
<accession>B9J3N2</accession>